<dbReference type="EMBL" id="CP001348">
    <property type="protein sequence ID" value="ACL77288.1"/>
    <property type="molecule type" value="Genomic_DNA"/>
</dbReference>
<dbReference type="RefSeq" id="WP_015926347.1">
    <property type="nucleotide sequence ID" value="NC_011898.1"/>
</dbReference>
<dbReference type="STRING" id="394503.Ccel_2994"/>
<dbReference type="KEGG" id="cce:Ccel_2994"/>
<dbReference type="eggNOG" id="COG1671">
    <property type="taxonomic scope" value="Bacteria"/>
</dbReference>
<dbReference type="HOGENOM" id="CLU_106619_0_0_9"/>
<dbReference type="OrthoDB" id="9798918at2"/>
<dbReference type="Proteomes" id="UP000001349">
    <property type="component" value="Chromosome"/>
</dbReference>
<dbReference type="HAMAP" id="MF_00489">
    <property type="entry name" value="UPF0178"/>
    <property type="match status" value="1"/>
</dbReference>
<dbReference type="InterPro" id="IPR003791">
    <property type="entry name" value="UPF0178"/>
</dbReference>
<dbReference type="NCBIfam" id="NF001095">
    <property type="entry name" value="PRK00124.1"/>
    <property type="match status" value="1"/>
</dbReference>
<dbReference type="PANTHER" id="PTHR35146">
    <property type="entry name" value="UPF0178 PROTEIN YAII"/>
    <property type="match status" value="1"/>
</dbReference>
<dbReference type="PANTHER" id="PTHR35146:SF1">
    <property type="entry name" value="UPF0178 PROTEIN YAII"/>
    <property type="match status" value="1"/>
</dbReference>
<dbReference type="Pfam" id="PF02639">
    <property type="entry name" value="DUF188"/>
    <property type="match status" value="1"/>
</dbReference>
<reference key="1">
    <citation type="submission" date="2009-01" db="EMBL/GenBank/DDBJ databases">
        <title>Complete sequence of Clostridium cellulolyticum H10.</title>
        <authorList>
            <consortium name="US DOE Joint Genome Institute"/>
            <person name="Lucas S."/>
            <person name="Copeland A."/>
            <person name="Lapidus A."/>
            <person name="Glavina del Rio T."/>
            <person name="Dalin E."/>
            <person name="Tice H."/>
            <person name="Bruce D."/>
            <person name="Goodwin L."/>
            <person name="Pitluck S."/>
            <person name="Chertkov O."/>
            <person name="Saunders E."/>
            <person name="Brettin T."/>
            <person name="Detter J.C."/>
            <person name="Han C."/>
            <person name="Larimer F."/>
            <person name="Land M."/>
            <person name="Hauser L."/>
            <person name="Kyrpides N."/>
            <person name="Ivanova N."/>
            <person name="Zhou J."/>
            <person name="Richardson P."/>
        </authorList>
    </citation>
    <scope>NUCLEOTIDE SEQUENCE [LARGE SCALE GENOMIC DNA]</scope>
    <source>
        <strain>ATCC 35319 / DSM 5812 / JCM 6584 / H10</strain>
    </source>
</reference>
<keyword id="KW-1185">Reference proteome</keyword>
<proteinExistence type="inferred from homology"/>
<protein>
    <recommendedName>
        <fullName evidence="1">UPF0178 protein Ccel_2994</fullName>
    </recommendedName>
</protein>
<name>Y2994_RUMCH</name>
<evidence type="ECO:0000255" key="1">
    <source>
        <dbReference type="HAMAP-Rule" id="MF_00489"/>
    </source>
</evidence>
<sequence length="153" mass="16953">MQILVDADACPVKDIITKNAKKYGIPVIMIIDTSHELNDGYSTVITVDKARDSVDIKLINMVQRGDIVVTQDYGVAAMGLGKGAKVLNQNGLIYSDANIDRLLFERHLGQKIRRAGGRTGTIRKRSKENDEAFEKALLLFIKPESEGPRDLKI</sequence>
<gene>
    <name type="ordered locus">Ccel_2994</name>
</gene>
<comment type="similarity">
    <text evidence="1">Belongs to the UPF0178 family.</text>
</comment>
<organism>
    <name type="scientific">Ruminiclostridium cellulolyticum (strain ATCC 35319 / DSM 5812 / JCM 6584 / H10)</name>
    <name type="common">Clostridium cellulolyticum</name>
    <dbReference type="NCBI Taxonomy" id="394503"/>
    <lineage>
        <taxon>Bacteria</taxon>
        <taxon>Bacillati</taxon>
        <taxon>Bacillota</taxon>
        <taxon>Clostridia</taxon>
        <taxon>Eubacteriales</taxon>
        <taxon>Oscillospiraceae</taxon>
        <taxon>Ruminiclostridium</taxon>
    </lineage>
</organism>
<feature type="chain" id="PRO_1000197829" description="UPF0178 protein Ccel_2994">
    <location>
        <begin position="1"/>
        <end position="153"/>
    </location>
</feature>
<accession>B8I8V6</accession>